<organism>
    <name type="scientific">Camponotus floridanus</name>
    <name type="common">Florida carpenter ant</name>
    <dbReference type="NCBI Taxonomy" id="104421"/>
    <lineage>
        <taxon>Eukaryota</taxon>
        <taxon>Metazoa</taxon>
        <taxon>Ecdysozoa</taxon>
        <taxon>Arthropoda</taxon>
        <taxon>Hexapoda</taxon>
        <taxon>Insecta</taxon>
        <taxon>Pterygota</taxon>
        <taxon>Neoptera</taxon>
        <taxon>Endopterygota</taxon>
        <taxon>Hymenoptera</taxon>
        <taxon>Apocrita</taxon>
        <taxon>Aculeata</taxon>
        <taxon>Formicoidea</taxon>
        <taxon>Formicidae</taxon>
        <taxon>Formicinae</taxon>
        <taxon>Camponotus</taxon>
    </lineage>
</organism>
<comment type="function">
    <text evidence="1">Myotropic peptides.</text>
</comment>
<comment type="subcellular location">
    <subcellularLocation>
        <location evidence="5">Secreted</location>
    </subcellularLocation>
</comment>
<comment type="tissue specificity">
    <text evidence="2">Orcokinin-3 is expressed throughout the central nervous system (at protein level).</text>
</comment>
<comment type="mass spectrometry">
    <molecule>Orcokinin-3</molecule>
    <text>Orcokinin-3.</text>
</comment>
<comment type="mass spectrometry">
    <molecule>Orcokinin-4</molecule>
    <text>Orcokinin-4.</text>
</comment>
<comment type="similarity">
    <text evidence="4">Belongs to the orcokinin family.</text>
</comment>
<comment type="caution">
    <text evidence="5">Several N-terminally and/or C-terminally extended versions of the predicted orcokinin-1 sequence can be detected; it is unclear which one is the active form. Orcokinin-2 is only predicted.</text>
</comment>
<comment type="caution">
    <text evidence="4">The gene model consists of only one exon and does not include an expected signal sequence.</text>
</comment>
<accession>E1ZVK3</accession>
<protein>
    <recommendedName>
        <fullName evidence="6">Orcokinin peptides</fullName>
    </recommendedName>
    <component>
        <recommendedName>
            <fullName evidence="3">Orcokinin-1</fullName>
        </recommendedName>
    </component>
    <component>
        <recommendedName>
            <fullName evidence="3">Orcokinin-2</fullName>
        </recommendedName>
    </component>
    <component>
        <recommendedName>
            <fullName evidence="3">Orcokinin-3</fullName>
        </recommendedName>
    </component>
    <component>
        <recommendedName>
            <fullName evidence="3">Orcokinin-4</fullName>
        </recommendedName>
    </component>
</protein>
<sequence>MNIRPGNFDEIDRSVFDRFPKRNIDEIDTAFDSFFKRNIDEIDRVGWNGFVKRLNNYLADRQRR</sequence>
<dbReference type="EMBL" id="GL434548">
    <property type="protein sequence ID" value="EFN74772.1"/>
    <property type="molecule type" value="Genomic_DNA"/>
</dbReference>
<dbReference type="STRING" id="104421.E1ZVK3"/>
<dbReference type="OMA" id="MINVRTR"/>
<dbReference type="Proteomes" id="UP000000311">
    <property type="component" value="Unassembled WGS sequence"/>
</dbReference>
<dbReference type="GO" id="GO:0005576">
    <property type="term" value="C:extracellular region"/>
    <property type="evidence" value="ECO:0007669"/>
    <property type="project" value="UniProtKB-SubCell"/>
</dbReference>
<dbReference type="GO" id="GO:0007218">
    <property type="term" value="P:neuropeptide signaling pathway"/>
    <property type="evidence" value="ECO:0007669"/>
    <property type="project" value="UniProtKB-KW"/>
</dbReference>
<proteinExistence type="evidence at protein level"/>
<name>ORCK_CAMFO</name>
<reference key="1">
    <citation type="journal article" date="2010" name="Science">
        <title>Genomic comparison of the ants Camponotus floridanus and Harpegnathos saltator.</title>
        <authorList>
            <person name="Bonasio R."/>
            <person name="Zhang G."/>
            <person name="Ye C."/>
            <person name="Mutti N.S."/>
            <person name="Fang X."/>
            <person name="Qin N."/>
            <person name="Donahue G."/>
            <person name="Yang P."/>
            <person name="Li Q."/>
            <person name="Li C."/>
            <person name="Zhang P."/>
            <person name="Huang Z."/>
            <person name="Berger S.L."/>
            <person name="Reinberg D."/>
            <person name="Wang J."/>
            <person name="Liebig J."/>
        </authorList>
    </citation>
    <scope>NUCLEOTIDE SEQUENCE [LARGE SCALE GENOMIC DNA]</scope>
</reference>
<reference evidence="4" key="2">
    <citation type="journal article" date="2015" name="J. Proteome Res.">
        <title>Neuropeptidomics of the carpenter ant Camponotus floridanus.</title>
        <authorList>
            <person name="Schmitt F."/>
            <person name="Vanselow J.T."/>
            <person name="Schlosser A."/>
            <person name="Kahnt J."/>
            <person name="Roessler W."/>
            <person name="Wegener C."/>
        </authorList>
    </citation>
    <scope>PROTEIN SEQUENCE OF 3-21; 38-51 AND 54-62</scope>
    <scope>TISSUE SPECIFICITY</scope>
    <scope>MASS SPECTROMETRY</scope>
    <scope>IDENTIFICATION BY MASS SPECTROMETRY</scope>
</reference>
<evidence type="ECO:0000250" key="1">
    <source>
        <dbReference type="UniProtKB" id="Q9NL83"/>
    </source>
</evidence>
<evidence type="ECO:0000269" key="2">
    <source>
    </source>
</evidence>
<evidence type="ECO:0000303" key="3">
    <source>
    </source>
</evidence>
<evidence type="ECO:0000305" key="4"/>
<evidence type="ECO:0000305" key="5">
    <source>
    </source>
</evidence>
<evidence type="ECO:0000312" key="6">
    <source>
        <dbReference type="EMBL" id="EFN74772.1"/>
    </source>
</evidence>
<keyword id="KW-0165">Cleavage on pair of basic residues</keyword>
<keyword id="KW-0903">Direct protein sequencing</keyword>
<keyword id="KW-0527">Neuropeptide</keyword>
<keyword id="KW-1185">Reference proteome</keyword>
<keyword id="KW-0964">Secreted</keyword>
<gene>
    <name evidence="6" type="ORF">EAG_10180</name>
</gene>
<feature type="propeptide" id="PRO_0000434234" evidence="5">
    <location>
        <begin position="1"/>
        <end position="6"/>
    </location>
</feature>
<feature type="peptide" id="PRO_0000434235" description="Orcokinin-1" evidence="3">
    <location>
        <begin position="7"/>
        <end position="20"/>
    </location>
</feature>
<feature type="propeptide" id="PRO_0000434236" evidence="5">
    <location>
        <begin position="23"/>
        <end position="24"/>
    </location>
</feature>
<feature type="peptide" id="PRO_0000434237" description="Orcokinin-2" evidence="3">
    <location>
        <begin position="25"/>
        <end position="35"/>
    </location>
</feature>
<feature type="peptide" id="PRO_0000434238" description="Orcokinin-3" evidence="2">
    <location>
        <begin position="38"/>
        <end position="51"/>
    </location>
</feature>
<feature type="peptide" id="PRO_0000434239" description="Orcokinin-4" evidence="2">
    <location>
        <begin position="54"/>
        <end position="62"/>
    </location>
</feature>